<protein>
    <recommendedName>
        <fullName evidence="4">CAPA-Periviscerokinin-2</fullName>
        <shortName evidence="4">CAPA-PVK-2</shortName>
    </recommendedName>
</protein>
<organism>
    <name type="scientific">Austrophasma rawsonvillense</name>
    <name type="common">Gladiator</name>
    <name type="synonym">Heel-walker</name>
    <dbReference type="NCBI Taxonomy" id="253137"/>
    <lineage>
        <taxon>Eukaryota</taxon>
        <taxon>Metazoa</taxon>
        <taxon>Ecdysozoa</taxon>
        <taxon>Arthropoda</taxon>
        <taxon>Hexapoda</taxon>
        <taxon>Insecta</taxon>
        <taxon>Pterygota</taxon>
        <taxon>Neoptera</taxon>
        <taxon>Polyneoptera</taxon>
        <taxon>Mantophasmatodea</taxon>
        <taxon>Austrophasmatidae</taxon>
        <taxon>Austrophasma</taxon>
    </lineage>
</organism>
<evidence type="ECO:0000250" key="1">
    <source>
        <dbReference type="UniProtKB" id="P83923"/>
    </source>
</evidence>
<evidence type="ECO:0000255" key="2"/>
<evidence type="ECO:0000269" key="3">
    <source>
    </source>
</evidence>
<evidence type="ECO:0000303" key="4">
    <source>
    </source>
</evidence>
<evidence type="ECO:0000305" key="5"/>
<evidence type="ECO:0000305" key="6">
    <source>
    </source>
</evidence>
<reference evidence="5" key="1">
    <citation type="journal article" date="2012" name="Syst. Biol.">
        <title>Peptidomics-based phylogeny and biogeography of Mantophasmatodea (Hexapoda).</title>
        <authorList>
            <person name="Predel R."/>
            <person name="Neupert S."/>
            <person name="Huetteroth W."/>
            <person name="Kahnt J."/>
            <person name="Waidelich D."/>
            <person name="Roth S."/>
        </authorList>
    </citation>
    <scope>PROTEIN SEQUENCE</scope>
    <scope>AMIDATION AT VAL-19</scope>
    <source>
        <tissue evidence="3">Abdominal perisympathetic organs</tissue>
    </source>
</reference>
<dbReference type="GO" id="GO:0005576">
    <property type="term" value="C:extracellular region"/>
    <property type="evidence" value="ECO:0007669"/>
    <property type="project" value="UniProtKB-SubCell"/>
</dbReference>
<dbReference type="GO" id="GO:0007218">
    <property type="term" value="P:neuropeptide signaling pathway"/>
    <property type="evidence" value="ECO:0007669"/>
    <property type="project" value="UniProtKB-KW"/>
</dbReference>
<proteinExistence type="evidence at protein level"/>
<sequence length="19" mass="2048">SGLQFAVLDGQGFLPFPRV</sequence>
<feature type="peptide" id="PRO_0000421643" description="CAPA-Periviscerokinin-2" evidence="3">
    <location>
        <begin position="1"/>
        <end position="19"/>
    </location>
</feature>
<feature type="modified residue" description="Valine amide" evidence="3">
    <location>
        <position position="19"/>
    </location>
</feature>
<comment type="function">
    <text evidence="1">Mediates visceral muscle contractile activity (myotropic activity).</text>
</comment>
<comment type="subcellular location">
    <subcellularLocation>
        <location evidence="6">Secreted</location>
    </subcellularLocation>
</comment>
<comment type="similarity">
    <text evidence="2">Belongs to the periviscerokinin family.</text>
</comment>
<name>PVK2_AUSRA</name>
<keyword id="KW-0027">Amidation</keyword>
<keyword id="KW-0903">Direct protein sequencing</keyword>
<keyword id="KW-0527">Neuropeptide</keyword>
<keyword id="KW-0964">Secreted</keyword>
<accession>B3A099</accession>